<protein>
    <recommendedName>
        <fullName>Phospholipid scramblase 1</fullName>
        <shortName>PL scramblase 1</shortName>
    </recommendedName>
    <alternativeName>
        <fullName>Ca(2+)-dependent phospholipid scramblase 1</fullName>
    </alternativeName>
    <alternativeName>
        <fullName evidence="1">Mg(2+)-dependent nuclease</fullName>
        <ecNumber evidence="1">3.1.-.-</ecNumber>
    </alternativeName>
    <alternativeName>
        <fullName>Transplantability-associated protein 1</fullName>
        <shortName>NOR1</shortName>
        <shortName>TRA1</shortName>
    </alternativeName>
</protein>
<gene>
    <name type="primary">Plscr1</name>
    <name type="synonym">Tra1b</name>
    <name type="synonym">Tras1</name>
</gene>
<sequence length="328" mass="35914">MENHSKQTEAPHPGTYMPAGYPPPYPPAAFQGPSDHAAYPIPQAGYQGPPGPYPGPQPGYPVPPGGYAGGGPSGFPVQNQPAYNHPGGPGGTPWMPAPPPPLNCPPGLEYLAQIDQLLVHQQIELLEVLTGFETNNKYEIKNSLGQRVYFAVEDTDCCTRNCCGASRPFTLRILDNLGREVMTLERPLRCSSCCFPCCLQEIEIQAPPGVPVGYVTQTWHPCLPKFTLQNEKKQDVLKVVGPCVVCSCCSDIDFELKSLDEESVVGKISKQWSGFVREAFTDADNFGIQFPLDLDVKMKAVMLGACFLIDFMFFERTGNEEQRSGAWQ</sequence>
<keyword id="KW-0106">Calcium</keyword>
<keyword id="KW-1003">Cell membrane</keyword>
<keyword id="KW-0160">Chromosomal rearrangement</keyword>
<keyword id="KW-0963">Cytoplasm</keyword>
<keyword id="KW-0238">DNA-binding</keyword>
<keyword id="KW-0378">Hydrolase</keyword>
<keyword id="KW-0445">Lipid transport</keyword>
<keyword id="KW-0449">Lipoprotein</keyword>
<keyword id="KW-0472">Membrane</keyword>
<keyword id="KW-0540">Nuclease</keyword>
<keyword id="KW-0539">Nucleus</keyword>
<keyword id="KW-0564">Palmitate</keyword>
<keyword id="KW-0597">Phosphoprotein</keyword>
<keyword id="KW-1185">Reference proteome</keyword>
<keyword id="KW-0677">Repeat</keyword>
<keyword id="KW-0729">SH3-binding</keyword>
<keyword id="KW-0812">Transmembrane</keyword>
<keyword id="KW-1133">Transmembrane helix</keyword>
<keyword id="KW-0813">Transport</keyword>
<reference key="1">
    <citation type="journal article" date="2000" name="Biochim. Biophys. Acta">
        <title>Identification of three new members of the phospholipid scramblase gene family.</title>
        <authorList>
            <person name="Wiedmer T."/>
            <person name="Zhou Q."/>
            <person name="Kwoh D.Y."/>
            <person name="Sims P.J."/>
        </authorList>
    </citation>
    <scope>NUCLEOTIDE SEQUENCE [MRNA]</scope>
</reference>
<reference key="2">
    <citation type="journal article" date="2005" name="Science">
        <title>The transcriptional landscape of the mammalian genome.</title>
        <authorList>
            <person name="Carninci P."/>
            <person name="Kasukawa T."/>
            <person name="Katayama S."/>
            <person name="Gough J."/>
            <person name="Frith M.C."/>
            <person name="Maeda N."/>
            <person name="Oyama R."/>
            <person name="Ravasi T."/>
            <person name="Lenhard B."/>
            <person name="Wells C."/>
            <person name="Kodzius R."/>
            <person name="Shimokawa K."/>
            <person name="Bajic V.B."/>
            <person name="Brenner S.E."/>
            <person name="Batalov S."/>
            <person name="Forrest A.R."/>
            <person name="Zavolan M."/>
            <person name="Davis M.J."/>
            <person name="Wilming L.G."/>
            <person name="Aidinis V."/>
            <person name="Allen J.E."/>
            <person name="Ambesi-Impiombato A."/>
            <person name="Apweiler R."/>
            <person name="Aturaliya R.N."/>
            <person name="Bailey T.L."/>
            <person name="Bansal M."/>
            <person name="Baxter L."/>
            <person name="Beisel K.W."/>
            <person name="Bersano T."/>
            <person name="Bono H."/>
            <person name="Chalk A.M."/>
            <person name="Chiu K.P."/>
            <person name="Choudhary V."/>
            <person name="Christoffels A."/>
            <person name="Clutterbuck D.R."/>
            <person name="Crowe M.L."/>
            <person name="Dalla E."/>
            <person name="Dalrymple B.P."/>
            <person name="de Bono B."/>
            <person name="Della Gatta G."/>
            <person name="di Bernardo D."/>
            <person name="Down T."/>
            <person name="Engstrom P."/>
            <person name="Fagiolini M."/>
            <person name="Faulkner G."/>
            <person name="Fletcher C.F."/>
            <person name="Fukushima T."/>
            <person name="Furuno M."/>
            <person name="Futaki S."/>
            <person name="Gariboldi M."/>
            <person name="Georgii-Hemming P."/>
            <person name="Gingeras T.R."/>
            <person name="Gojobori T."/>
            <person name="Green R.E."/>
            <person name="Gustincich S."/>
            <person name="Harbers M."/>
            <person name="Hayashi Y."/>
            <person name="Hensch T.K."/>
            <person name="Hirokawa N."/>
            <person name="Hill D."/>
            <person name="Huminiecki L."/>
            <person name="Iacono M."/>
            <person name="Ikeo K."/>
            <person name="Iwama A."/>
            <person name="Ishikawa T."/>
            <person name="Jakt M."/>
            <person name="Kanapin A."/>
            <person name="Katoh M."/>
            <person name="Kawasawa Y."/>
            <person name="Kelso J."/>
            <person name="Kitamura H."/>
            <person name="Kitano H."/>
            <person name="Kollias G."/>
            <person name="Krishnan S.P."/>
            <person name="Kruger A."/>
            <person name="Kummerfeld S.K."/>
            <person name="Kurochkin I.V."/>
            <person name="Lareau L.F."/>
            <person name="Lazarevic D."/>
            <person name="Lipovich L."/>
            <person name="Liu J."/>
            <person name="Liuni S."/>
            <person name="McWilliam S."/>
            <person name="Madan Babu M."/>
            <person name="Madera M."/>
            <person name="Marchionni L."/>
            <person name="Matsuda H."/>
            <person name="Matsuzawa S."/>
            <person name="Miki H."/>
            <person name="Mignone F."/>
            <person name="Miyake S."/>
            <person name="Morris K."/>
            <person name="Mottagui-Tabar S."/>
            <person name="Mulder N."/>
            <person name="Nakano N."/>
            <person name="Nakauchi H."/>
            <person name="Ng P."/>
            <person name="Nilsson R."/>
            <person name="Nishiguchi S."/>
            <person name="Nishikawa S."/>
            <person name="Nori F."/>
            <person name="Ohara O."/>
            <person name="Okazaki Y."/>
            <person name="Orlando V."/>
            <person name="Pang K.C."/>
            <person name="Pavan W.J."/>
            <person name="Pavesi G."/>
            <person name="Pesole G."/>
            <person name="Petrovsky N."/>
            <person name="Piazza S."/>
            <person name="Reed J."/>
            <person name="Reid J.F."/>
            <person name="Ring B.Z."/>
            <person name="Ringwald M."/>
            <person name="Rost B."/>
            <person name="Ruan Y."/>
            <person name="Salzberg S.L."/>
            <person name="Sandelin A."/>
            <person name="Schneider C."/>
            <person name="Schoenbach C."/>
            <person name="Sekiguchi K."/>
            <person name="Semple C.A."/>
            <person name="Seno S."/>
            <person name="Sessa L."/>
            <person name="Sheng Y."/>
            <person name="Shibata Y."/>
            <person name="Shimada H."/>
            <person name="Shimada K."/>
            <person name="Silva D."/>
            <person name="Sinclair B."/>
            <person name="Sperling S."/>
            <person name="Stupka E."/>
            <person name="Sugiura K."/>
            <person name="Sultana R."/>
            <person name="Takenaka Y."/>
            <person name="Taki K."/>
            <person name="Tammoja K."/>
            <person name="Tan S.L."/>
            <person name="Tang S."/>
            <person name="Taylor M.S."/>
            <person name="Tegner J."/>
            <person name="Teichmann S.A."/>
            <person name="Ueda H.R."/>
            <person name="van Nimwegen E."/>
            <person name="Verardo R."/>
            <person name="Wei C.L."/>
            <person name="Yagi K."/>
            <person name="Yamanishi H."/>
            <person name="Zabarovsky E."/>
            <person name="Zhu S."/>
            <person name="Zimmer A."/>
            <person name="Hide W."/>
            <person name="Bult C."/>
            <person name="Grimmond S.M."/>
            <person name="Teasdale R.D."/>
            <person name="Liu E.T."/>
            <person name="Brusic V."/>
            <person name="Quackenbush J."/>
            <person name="Wahlestedt C."/>
            <person name="Mattick J.S."/>
            <person name="Hume D.A."/>
            <person name="Kai C."/>
            <person name="Sasaki D."/>
            <person name="Tomaru Y."/>
            <person name="Fukuda S."/>
            <person name="Kanamori-Katayama M."/>
            <person name="Suzuki M."/>
            <person name="Aoki J."/>
            <person name="Arakawa T."/>
            <person name="Iida J."/>
            <person name="Imamura K."/>
            <person name="Itoh M."/>
            <person name="Kato T."/>
            <person name="Kawaji H."/>
            <person name="Kawagashira N."/>
            <person name="Kawashima T."/>
            <person name="Kojima M."/>
            <person name="Kondo S."/>
            <person name="Konno H."/>
            <person name="Nakano K."/>
            <person name="Ninomiya N."/>
            <person name="Nishio T."/>
            <person name="Okada M."/>
            <person name="Plessy C."/>
            <person name="Shibata K."/>
            <person name="Shiraki T."/>
            <person name="Suzuki S."/>
            <person name="Tagami M."/>
            <person name="Waki K."/>
            <person name="Watahiki A."/>
            <person name="Okamura-Oho Y."/>
            <person name="Suzuki H."/>
            <person name="Kawai J."/>
            <person name="Hayashizaki Y."/>
        </authorList>
    </citation>
    <scope>NUCLEOTIDE SEQUENCE [LARGE SCALE MRNA]</scope>
    <source>
        <strain>C57BL/6J</strain>
        <tissue>Embryo</tissue>
    </source>
</reference>
<reference key="3">
    <citation type="journal article" date="1997" name="Blood">
        <title>TRA1, a novel mRNA highly expressed in leukemogenic mouse monocytic sublines but not in nonleukemogenic sublines.</title>
        <authorList>
            <person name="Kasukabe T."/>
            <person name="Okabe-Kado J."/>
            <person name="Honma Y."/>
        </authorList>
    </citation>
    <scope>NUCLEOTIDE SEQUENCE [MRNA] OF 24-328</scope>
    <scope>CHROMOSOMAL TRANSLOCATION</scope>
    <source>
        <strain>BALB/cJ</strain>
        <tissue>Kidney</tissue>
    </source>
</reference>
<reference key="4">
    <citation type="journal article" date="2002" name="Blood">
        <title>Normal hemostasis but defective hematopoietic response to growth factors in mice deficient in phospholipid scramblase 1.</title>
        <authorList>
            <person name="Zhou Q."/>
            <person name="Zhao J."/>
            <person name="Wiedmer T."/>
            <person name="Sims P.J."/>
        </authorList>
    </citation>
    <scope>FUNCTION</scope>
    <scope>INDUCTION</scope>
    <scope>DISRUPTION PHENOTYPE</scope>
</reference>
<reference key="5">
    <citation type="journal article" date="2010" name="Cell">
        <title>A tissue-specific atlas of mouse protein phosphorylation and expression.</title>
        <authorList>
            <person name="Huttlin E.L."/>
            <person name="Jedrychowski M.P."/>
            <person name="Elias J.E."/>
            <person name="Goswami T."/>
            <person name="Rad R."/>
            <person name="Beausoleil S.A."/>
            <person name="Villen J."/>
            <person name="Haas W."/>
            <person name="Sowa M.E."/>
            <person name="Gygi S.P."/>
        </authorList>
    </citation>
    <scope>IDENTIFICATION BY MASS SPECTROMETRY [LARGE SCALE ANALYSIS]</scope>
    <source>
        <tissue>Lung</tissue>
        <tissue>Spleen</tissue>
    </source>
</reference>
<reference key="6">
    <citation type="journal article" date="2016" name="PLoS ONE">
        <title>Phospholipid Scramblase 1 Modulates FcR-Mediated Phagocytosis in Differentiated Macrophages.</title>
        <authorList>
            <person name="Herate C."/>
            <person name="Ramdani G."/>
            <person name="Grant N.J."/>
            <person name="Marion S."/>
            <person name="Gasman S."/>
            <person name="Niedergang F."/>
            <person name="Benichou S."/>
            <person name="Bouchet J."/>
        </authorList>
    </citation>
    <scope>FUNCTION</scope>
</reference>
<reference key="7">
    <citation type="journal article" date="2020" name="Cells">
        <title>Transient Receptor Potential Canonical 5-Scramblase Signaling Complex Mediates Neuronal Phosphatidylserine Externalization and Apoptosis.</title>
        <authorList>
            <person name="Guo J."/>
            <person name="Li J."/>
            <person name="Xia L."/>
            <person name="Wang Y."/>
            <person name="Zhu J."/>
            <person name="Du J."/>
            <person name="Lu Y."/>
            <person name="Liu G."/>
            <person name="Yao X."/>
            <person name="Shen B."/>
        </authorList>
    </citation>
    <scope>FUNCTION</scope>
    <scope>TRANSPORTER ACTIVITY</scope>
    <scope>INTERACTION WITH TRPC1; TRPC4 AND TRPC5</scope>
</reference>
<reference key="8">
    <citation type="journal article" date="2022" name="Sci. Rep.">
        <title>ILDR1 promotes influenza A virus replication through binding to PLSCR1.</title>
        <authorList>
            <person name="Liu Y."/>
            <person name="Lin S."/>
            <person name="Xie Y."/>
            <person name="Zhao L."/>
            <person name="Du H."/>
            <person name="Yang S."/>
            <person name="Yin B."/>
            <person name="Li G."/>
            <person name="Zhao Z."/>
            <person name="Huang Z."/>
            <person name="Xu Z."/>
            <person name="Wu J."/>
        </authorList>
    </citation>
    <scope>DISRUPTION PHENOTYPE</scope>
</reference>
<dbReference type="EC" id="3.1.-.-" evidence="1"/>
<dbReference type="EMBL" id="AF159593">
    <property type="protein sequence ID" value="AAF77076.1"/>
    <property type="molecule type" value="mRNA"/>
</dbReference>
<dbReference type="EMBL" id="AK003628">
    <property type="protein sequence ID" value="BAB22897.1"/>
    <property type="molecule type" value="mRNA"/>
</dbReference>
<dbReference type="EMBL" id="D78354">
    <property type="protein sequence ID" value="BAA23663.1"/>
    <property type="status" value="ALT_INIT"/>
    <property type="molecule type" value="mRNA"/>
</dbReference>
<dbReference type="EMBL" id="D78355">
    <property type="protein sequence ID" value="BAA23664.1"/>
    <property type="status" value="ALT_FRAME"/>
    <property type="molecule type" value="mRNA"/>
</dbReference>
<dbReference type="CCDS" id="CCDS52886.1"/>
<dbReference type="RefSeq" id="NP_001397382.1">
    <property type="nucleotide sequence ID" value="NM_001410453.1"/>
</dbReference>
<dbReference type="RefSeq" id="NP_035766.2">
    <property type="nucleotide sequence ID" value="NM_011636.3"/>
</dbReference>
<dbReference type="RefSeq" id="XP_006511115.1">
    <property type="nucleotide sequence ID" value="XM_006511052.3"/>
</dbReference>
<dbReference type="BioGRID" id="204311">
    <property type="interactions" value="2"/>
</dbReference>
<dbReference type="FunCoup" id="Q9JJ00">
    <property type="interactions" value="2016"/>
</dbReference>
<dbReference type="IntAct" id="Q9JJ00">
    <property type="interactions" value="1"/>
</dbReference>
<dbReference type="STRING" id="10090.ENSMUSP00000091318"/>
<dbReference type="SwissLipids" id="SLP:000000348"/>
<dbReference type="GlyGen" id="Q9JJ00">
    <property type="glycosylation" value="2 sites, 1 O-linked glycan (1 site)"/>
</dbReference>
<dbReference type="iPTMnet" id="Q9JJ00"/>
<dbReference type="PhosphoSitePlus" id="Q9JJ00"/>
<dbReference type="SwissPalm" id="Q9JJ00"/>
<dbReference type="jPOST" id="Q9JJ00"/>
<dbReference type="PaxDb" id="10090-ENSMUSP00000091318"/>
<dbReference type="ProteomicsDB" id="289625"/>
<dbReference type="Pumba" id="Q9JJ00"/>
<dbReference type="DNASU" id="22038"/>
<dbReference type="Ensembl" id="ENSMUST00000093801.10">
    <property type="protein sequence ID" value="ENSMUSP00000091318.4"/>
    <property type="gene ID" value="ENSMUSG00000032369.14"/>
</dbReference>
<dbReference type="Ensembl" id="ENSMUST00000186364.2">
    <property type="protein sequence ID" value="ENSMUSP00000139479.2"/>
    <property type="gene ID" value="ENSMUSG00000032369.14"/>
</dbReference>
<dbReference type="GeneID" id="22038"/>
<dbReference type="KEGG" id="mmu:22038"/>
<dbReference type="UCSC" id="uc009ram.2">
    <property type="organism name" value="mouse"/>
</dbReference>
<dbReference type="AGR" id="MGI:893575"/>
<dbReference type="CTD" id="5359"/>
<dbReference type="MGI" id="MGI:893575">
    <property type="gene designation" value="Plscr1"/>
</dbReference>
<dbReference type="VEuPathDB" id="HostDB:ENSMUSG00000032369"/>
<dbReference type="eggNOG" id="KOG0621">
    <property type="taxonomic scope" value="Eukaryota"/>
</dbReference>
<dbReference type="GeneTree" id="ENSGT00940000154435"/>
<dbReference type="HOGENOM" id="CLU_053024_2_0_1"/>
<dbReference type="InParanoid" id="Q9JJ00"/>
<dbReference type="OMA" id="QNWHLWR"/>
<dbReference type="OrthoDB" id="191150at2759"/>
<dbReference type="PhylomeDB" id="Q9JJ00"/>
<dbReference type="TreeFam" id="TF314939"/>
<dbReference type="BRENDA" id="7.6.2.1">
    <property type="organism ID" value="3474"/>
</dbReference>
<dbReference type="BioGRID-ORCS" id="22038">
    <property type="hits" value="1 hit in 80 CRISPR screens"/>
</dbReference>
<dbReference type="ChiTaRS" id="Plscr1">
    <property type="organism name" value="mouse"/>
</dbReference>
<dbReference type="PRO" id="PR:Q9JJ00"/>
<dbReference type="Proteomes" id="UP000000589">
    <property type="component" value="Chromosome 9"/>
</dbReference>
<dbReference type="RNAct" id="Q9JJ00">
    <property type="molecule type" value="protein"/>
</dbReference>
<dbReference type="Bgee" id="ENSMUSG00000032369">
    <property type="expression patterns" value="Expressed in ileum and 70 other cell types or tissues"/>
</dbReference>
<dbReference type="GO" id="GO:0062023">
    <property type="term" value="C:collagen-containing extracellular matrix"/>
    <property type="evidence" value="ECO:0000250"/>
    <property type="project" value="UniProtKB"/>
</dbReference>
<dbReference type="GO" id="GO:0005829">
    <property type="term" value="C:cytosol"/>
    <property type="evidence" value="ECO:0000314"/>
    <property type="project" value="UniProtKB"/>
</dbReference>
<dbReference type="GO" id="GO:0005794">
    <property type="term" value="C:Golgi apparatus"/>
    <property type="evidence" value="ECO:0000250"/>
    <property type="project" value="UniProtKB"/>
</dbReference>
<dbReference type="GO" id="GO:0045121">
    <property type="term" value="C:membrane raft"/>
    <property type="evidence" value="ECO:0000250"/>
    <property type="project" value="UniProtKB"/>
</dbReference>
<dbReference type="GO" id="GO:0005730">
    <property type="term" value="C:nucleolus"/>
    <property type="evidence" value="ECO:0000250"/>
    <property type="project" value="UniProtKB"/>
</dbReference>
<dbReference type="GO" id="GO:0005634">
    <property type="term" value="C:nucleus"/>
    <property type="evidence" value="ECO:0000314"/>
    <property type="project" value="UniProtKB"/>
</dbReference>
<dbReference type="GO" id="GO:0048471">
    <property type="term" value="C:perinuclear region of cytoplasm"/>
    <property type="evidence" value="ECO:0000250"/>
    <property type="project" value="UniProtKB"/>
</dbReference>
<dbReference type="GO" id="GO:0005886">
    <property type="term" value="C:plasma membrane"/>
    <property type="evidence" value="ECO:0000314"/>
    <property type="project" value="UniProtKB"/>
</dbReference>
<dbReference type="GO" id="GO:0005509">
    <property type="term" value="F:calcium ion binding"/>
    <property type="evidence" value="ECO:0000250"/>
    <property type="project" value="UniProtKB"/>
</dbReference>
<dbReference type="GO" id="GO:0042609">
    <property type="term" value="F:CD4 receptor binding"/>
    <property type="evidence" value="ECO:0000250"/>
    <property type="project" value="UniProtKB"/>
</dbReference>
<dbReference type="GO" id="GO:0003677">
    <property type="term" value="F:DNA binding"/>
    <property type="evidence" value="ECO:0007669"/>
    <property type="project" value="UniProtKB-KW"/>
</dbReference>
<dbReference type="GO" id="GO:0001228">
    <property type="term" value="F:DNA-binding transcription activator activity, RNA polymerase II-specific"/>
    <property type="evidence" value="ECO:0000250"/>
    <property type="project" value="UniProtKB"/>
</dbReference>
<dbReference type="GO" id="GO:0005154">
    <property type="term" value="F:epidermal growth factor receptor binding"/>
    <property type="evidence" value="ECO:0000250"/>
    <property type="project" value="UniProtKB"/>
</dbReference>
<dbReference type="GO" id="GO:0032791">
    <property type="term" value="F:lead ion binding"/>
    <property type="evidence" value="ECO:0000250"/>
    <property type="project" value="UniProtKB"/>
</dbReference>
<dbReference type="GO" id="GO:0000287">
    <property type="term" value="F:magnesium ion binding"/>
    <property type="evidence" value="ECO:0000250"/>
    <property type="project" value="UniProtKB"/>
</dbReference>
<dbReference type="GO" id="GO:0045340">
    <property type="term" value="F:mercury ion binding"/>
    <property type="evidence" value="ECO:0000250"/>
    <property type="project" value="UniProtKB"/>
</dbReference>
<dbReference type="GO" id="GO:0004518">
    <property type="term" value="F:nuclease activity"/>
    <property type="evidence" value="ECO:0000250"/>
    <property type="project" value="UniProtKB"/>
</dbReference>
<dbReference type="GO" id="GO:0017128">
    <property type="term" value="F:phospholipid scramblase activity"/>
    <property type="evidence" value="ECO:0000250"/>
    <property type="project" value="UniProtKB"/>
</dbReference>
<dbReference type="GO" id="GO:0017124">
    <property type="term" value="F:SH3 domain binding"/>
    <property type="evidence" value="ECO:0000250"/>
    <property type="project" value="UniProtKB"/>
</dbReference>
<dbReference type="GO" id="GO:0008270">
    <property type="term" value="F:zinc ion binding"/>
    <property type="evidence" value="ECO:0000250"/>
    <property type="project" value="UniProtKB"/>
</dbReference>
<dbReference type="GO" id="GO:0006953">
    <property type="term" value="P:acute-phase response"/>
    <property type="evidence" value="ECO:0000270"/>
    <property type="project" value="UniProtKB"/>
</dbReference>
<dbReference type="GO" id="GO:0071345">
    <property type="term" value="P:cellular response to cytokine stimulus"/>
    <property type="evidence" value="ECO:0000270"/>
    <property type="project" value="UniProtKB"/>
</dbReference>
<dbReference type="GO" id="GO:0071222">
    <property type="term" value="P:cellular response to lipopolysaccharide"/>
    <property type="evidence" value="ECO:0000270"/>
    <property type="project" value="UniProtKB"/>
</dbReference>
<dbReference type="GO" id="GO:0051607">
    <property type="term" value="P:defense response to virus"/>
    <property type="evidence" value="ECO:0000315"/>
    <property type="project" value="UniProtKB"/>
</dbReference>
<dbReference type="GO" id="GO:0097193">
    <property type="term" value="P:intrinsic apoptotic signaling pathway"/>
    <property type="evidence" value="ECO:0000314"/>
    <property type="project" value="UniProtKB"/>
</dbReference>
<dbReference type="GO" id="GO:0030099">
    <property type="term" value="P:myeloid cell differentiation"/>
    <property type="evidence" value="ECO:0000315"/>
    <property type="project" value="MGI"/>
</dbReference>
<dbReference type="GO" id="GO:0050765">
    <property type="term" value="P:negative regulation of phagocytosis"/>
    <property type="evidence" value="ECO:0000250"/>
    <property type="project" value="UniProtKB"/>
</dbReference>
<dbReference type="GO" id="GO:0045071">
    <property type="term" value="P:negative regulation of viral genome replication"/>
    <property type="evidence" value="ECO:0000315"/>
    <property type="project" value="UniProtKB"/>
</dbReference>
<dbReference type="GO" id="GO:0006659">
    <property type="term" value="P:phosphatidylserine biosynthetic process"/>
    <property type="evidence" value="ECO:0000314"/>
    <property type="project" value="UniProtKB"/>
</dbReference>
<dbReference type="GO" id="GO:0070782">
    <property type="term" value="P:phosphatidylserine exposure on apoptotic cell surface"/>
    <property type="evidence" value="ECO:0000314"/>
    <property type="project" value="MGI"/>
</dbReference>
<dbReference type="GO" id="GO:0017121">
    <property type="term" value="P:plasma membrane phospholipid scrambling"/>
    <property type="evidence" value="ECO:0000314"/>
    <property type="project" value="UniProtKB"/>
</dbReference>
<dbReference type="GO" id="GO:0043065">
    <property type="term" value="P:positive regulation of apoptotic process"/>
    <property type="evidence" value="ECO:0000316"/>
    <property type="project" value="MGI"/>
</dbReference>
<dbReference type="GO" id="GO:1905820">
    <property type="term" value="P:positive regulation of chromosome separation"/>
    <property type="evidence" value="ECO:0000250"/>
    <property type="project" value="UniProtKB"/>
</dbReference>
<dbReference type="GO" id="GO:2000373">
    <property type="term" value="P:positive regulation of DNA topoisomerase (ATP-hydrolyzing) activity"/>
    <property type="evidence" value="ECO:0000250"/>
    <property type="project" value="UniProtKB"/>
</dbReference>
<dbReference type="GO" id="GO:0045089">
    <property type="term" value="P:positive regulation of innate immune response"/>
    <property type="evidence" value="ECO:0000315"/>
    <property type="project" value="UniProtKB"/>
</dbReference>
<dbReference type="GO" id="GO:1902231">
    <property type="term" value="P:positive regulation of intrinsic apoptotic signaling pathway in response to DNA damage"/>
    <property type="evidence" value="ECO:0000314"/>
    <property type="project" value="MGI"/>
</dbReference>
<dbReference type="GO" id="GO:0045944">
    <property type="term" value="P:positive regulation of transcription by RNA polymerase II"/>
    <property type="evidence" value="ECO:0000250"/>
    <property type="project" value="UniProtKB"/>
</dbReference>
<dbReference type="GO" id="GO:0060368">
    <property type="term" value="P:regulation of Fc receptor mediated stimulatory signaling pathway"/>
    <property type="evidence" value="ECO:0000250"/>
    <property type="project" value="UniProtKB"/>
</dbReference>
<dbReference type="GO" id="GO:0033003">
    <property type="term" value="P:regulation of mast cell activation"/>
    <property type="evidence" value="ECO:0000250"/>
    <property type="project" value="UniProtKB"/>
</dbReference>
<dbReference type="GO" id="GO:0035455">
    <property type="term" value="P:response to interferon-alpha"/>
    <property type="evidence" value="ECO:0000315"/>
    <property type="project" value="UniProtKB"/>
</dbReference>
<dbReference type="InterPro" id="IPR005552">
    <property type="entry name" value="Scramblase"/>
</dbReference>
<dbReference type="PANTHER" id="PTHR23248:SF38">
    <property type="entry name" value="PHOSPHOLIPID SCRAMBLASE 1"/>
    <property type="match status" value="1"/>
</dbReference>
<dbReference type="PANTHER" id="PTHR23248">
    <property type="entry name" value="PHOSPHOLIPID SCRAMBLASE-RELATED"/>
    <property type="match status" value="1"/>
</dbReference>
<dbReference type="Pfam" id="PF03803">
    <property type="entry name" value="Scramblase"/>
    <property type="match status" value="1"/>
</dbReference>
<feature type="chain" id="PRO_0000100785" description="Phospholipid scramblase 1">
    <location>
        <begin position="1"/>
        <end position="328"/>
    </location>
</feature>
<feature type="topological domain" description="Cytoplasmic" evidence="1">
    <location>
        <begin position="1"/>
        <end position="297"/>
    </location>
</feature>
<feature type="transmembrane region" description="Helical" evidence="2">
    <location>
        <begin position="298"/>
        <end position="314"/>
    </location>
</feature>
<feature type="topological domain" description="Extracellular" evidence="1">
    <location>
        <begin position="315"/>
        <end position="328"/>
    </location>
</feature>
<feature type="region of interest" description="Disordered" evidence="3">
    <location>
        <begin position="1"/>
        <end position="96"/>
    </location>
</feature>
<feature type="region of interest" description="Proline-rich domain (PRD)" evidence="1">
    <location>
        <begin position="1"/>
        <end position="93"/>
    </location>
</feature>
<feature type="short sequence motif" description="SH3-binding 1" evidence="2">
    <location>
        <begin position="18"/>
        <end position="26"/>
    </location>
</feature>
<feature type="short sequence motif" description="PPxY motif" evidence="2">
    <location>
        <begin position="22"/>
        <end position="25"/>
    </location>
</feature>
<feature type="short sequence motif" description="SH3-binding 2" evidence="2">
    <location>
        <begin position="56"/>
        <end position="64"/>
    </location>
</feature>
<feature type="short sequence motif" description="SH3-binding 3" evidence="2">
    <location>
        <begin position="93"/>
        <end position="101"/>
    </location>
</feature>
<feature type="short sequence motif" description="Nuclear localization signal" evidence="1">
    <location>
        <begin position="269"/>
        <end position="275"/>
    </location>
</feature>
<feature type="compositionally biased region" description="Low complexity" evidence="3">
    <location>
        <begin position="28"/>
        <end position="47"/>
    </location>
</feature>
<feature type="compositionally biased region" description="Pro residues" evidence="3">
    <location>
        <begin position="49"/>
        <end position="64"/>
    </location>
</feature>
<feature type="site" description="Breakpoint for translocation to form MMTRA1A">
    <location>
        <begin position="127"/>
        <end position="128"/>
    </location>
</feature>
<feature type="modified residue" description="Phosphotyrosine; by ABL" evidence="1">
    <location>
        <position position="83"/>
    </location>
</feature>
<feature type="modified residue" description="Phosphothreonine; by PKC/PRKCD" evidence="1">
    <location>
        <position position="170"/>
    </location>
</feature>
<feature type="lipid moiety-binding region" description="S-palmitoyl cysteine" evidence="1">
    <location>
        <position position="193"/>
    </location>
</feature>
<feature type="lipid moiety-binding region" description="S-palmitoyl cysteine" evidence="1">
    <location>
        <position position="194"/>
    </location>
</feature>
<feature type="lipid moiety-binding region" description="S-palmitoyl cysteine" evidence="1">
    <location>
        <position position="197"/>
    </location>
</feature>
<feature type="lipid moiety-binding region" description="S-palmitoyl cysteine" evidence="1">
    <location>
        <position position="198"/>
    </location>
</feature>
<feature type="sequence conflict" description="In Ref. 3." evidence="8" ref="3">
    <original>PYPP</original>
    <variation>GLCV</variation>
    <location>
        <begin position="24"/>
        <end position="27"/>
    </location>
</feature>
<feature type="sequence conflict" description="In Ref. 2; BAB22897." evidence="8" ref="2">
    <original>T</original>
    <variation>A</variation>
    <location>
        <position position="130"/>
    </location>
</feature>
<feature type="sequence conflict" description="In Ref. 2; BAB22897." evidence="8" ref="2">
    <original>K</original>
    <variation>R</variation>
    <location>
        <position position="267"/>
    </location>
</feature>
<evidence type="ECO:0000250" key="1">
    <source>
        <dbReference type="UniProtKB" id="O15162"/>
    </source>
</evidence>
<evidence type="ECO:0000255" key="2"/>
<evidence type="ECO:0000256" key="3">
    <source>
        <dbReference type="SAM" id="MobiDB-lite"/>
    </source>
</evidence>
<evidence type="ECO:0000269" key="4">
    <source>
    </source>
</evidence>
<evidence type="ECO:0000269" key="5">
    <source>
    </source>
</evidence>
<evidence type="ECO:0000269" key="6">
    <source>
    </source>
</evidence>
<evidence type="ECO:0000269" key="7">
    <source>
    </source>
</evidence>
<evidence type="ECO:0000305" key="8"/>
<evidence type="ECO:0000305" key="9">
    <source>
    </source>
</evidence>
<comment type="function">
    <text evidence="1 4 5 6">Catalyzes calcium-induced ATP-independent rapid bidirectional and non-specific distribution of phospholipids (lipid scrambling or lipid flip-flop) between the inner and outer leaflet of the plasma membrane resulting in collapse of the phospholipid asymmetry which leads to phosphatidylserine externalization on the cell surface (PubMed:32110987). Mediates calcium-dependent phosphatidylserine externalization and apoptosis in neurons via its association with TRPC5 (PubMed:32110987). Also exhibits magnesium-dependent nuclease activity against double-stranded DNA and RNA but not single-stranded DNA and can enhance DNA decatenation mediated by TOP2A (By similarity). Negatively regulates FcR-mediated phagocytosis in differentiated macrophages (PubMed:26745724). May contribute to cytokine-regulated cell proliferation and differentiation (PubMed:12010804).</text>
</comment>
<comment type="catalytic activity">
    <reaction evidence="1">
        <text>a 1,2-diacyl-sn-glycero-3-phosphocholine(in) = a 1,2-diacyl-sn-glycero-3-phosphocholine(out)</text>
        <dbReference type="Rhea" id="RHEA:38571"/>
        <dbReference type="ChEBI" id="CHEBI:57643"/>
    </reaction>
    <physiologicalReaction direction="left-to-right" evidence="1">
        <dbReference type="Rhea" id="RHEA:38572"/>
    </physiologicalReaction>
    <physiologicalReaction direction="right-to-left" evidence="1">
        <dbReference type="Rhea" id="RHEA:38573"/>
    </physiologicalReaction>
</comment>
<comment type="catalytic activity">
    <reaction evidence="1">
        <text>a 1,2-diacyl-sn-glycero-3-phosphoethanolamine(in) = a 1,2-diacyl-sn-glycero-3-phosphoethanolamine(out)</text>
        <dbReference type="Rhea" id="RHEA:38895"/>
        <dbReference type="ChEBI" id="CHEBI:64612"/>
    </reaction>
    <physiologicalReaction direction="left-to-right" evidence="1">
        <dbReference type="Rhea" id="RHEA:38896"/>
    </physiologicalReaction>
</comment>
<comment type="catalytic activity">
    <reaction evidence="9">
        <text>a 1,2-diacyl-sn-glycero-3-phospho-L-serine(in) = a 1,2-diacyl-sn-glycero-3-phospho-L-serine(out)</text>
        <dbReference type="Rhea" id="RHEA:38663"/>
        <dbReference type="ChEBI" id="CHEBI:57262"/>
    </reaction>
    <physiologicalReaction direction="left-to-right" evidence="9">
        <dbReference type="Rhea" id="RHEA:38664"/>
    </physiologicalReaction>
    <physiologicalReaction direction="right-to-left" evidence="1">
        <dbReference type="Rhea" id="RHEA:38665"/>
    </physiologicalReaction>
</comment>
<comment type="cofactor">
    <cofactor evidence="1">
        <name>Ca(2+)</name>
        <dbReference type="ChEBI" id="CHEBI:29108"/>
    </cofactor>
</comment>
<comment type="cofactor">
    <cofactor evidence="1">
        <name>Mg(2+)</name>
        <dbReference type="ChEBI" id="CHEBI:18420"/>
    </cofactor>
    <cofactor evidence="1">
        <name>Zn(2+)</name>
        <dbReference type="ChEBI" id="CHEBI:29105"/>
    </cofactor>
    <text evidence="1">Magnesium. Can also use zinc with lower efficiency.</text>
</comment>
<comment type="subunit">
    <text evidence="1 6">Forms homooligomers in the presence of calcium (By similarity). Interacts with ABL (By similarity). Interacts with RELT, RELL1 and RELL2 (By similarity). Interacts with OXSR1 in the presence of RELT (By similarity). Interacts with OCLN, TOP2A and TOP2B (By similarity). Interacts with TRPC1, TRPC4 and TRPC5 (PubMed:32110987). Interacts with ILDR1 (By similarity).</text>
</comment>
<comment type="subcellular location">
    <subcellularLocation>
        <location evidence="1">Cell membrane</location>
        <topology evidence="1">Single-pass type II membrane protein</topology>
    </subcellularLocation>
    <subcellularLocation>
        <location evidence="1">Cell membrane</location>
        <topology evidence="1">Lipid-anchor</topology>
        <orientation>Cytoplasmic side</orientation>
    </subcellularLocation>
    <subcellularLocation>
        <location evidence="1">Nucleus</location>
    </subcellularLocation>
    <subcellularLocation>
        <location evidence="1">Cytoplasm</location>
    </subcellularLocation>
    <subcellularLocation>
        <location evidence="1">Cytoplasm</location>
        <location evidence="1">Perinuclear region</location>
    </subcellularLocation>
    <text evidence="1">Localizes to the perinuclear region in the presence of RELT. Palmitoylation regulates its localization to the cell membrane or the nucleus; trafficking to the cell membrane is dependent upon palmitoylation whereas in the absence of palmitoylation, localizes to the nucleus.</text>
</comment>
<comment type="tissue specificity">
    <text>Highly expressed in kidney, lung, liver and bone marrow, slightly in spleen, heart and macrophage.</text>
</comment>
<comment type="induction">
    <text evidence="4">Up-regulated by SCF/KITL and GCSF/CSF3.</text>
</comment>
<comment type="domain">
    <text evidence="1">The N-terminal proline-rich domain (PRD) is required for phospholipid scramblase activity.</text>
</comment>
<comment type="domain">
    <text evidence="1">The transmembrane domain is essential for membrane insertion, phospholipid scramblase activity and proper calcium-binding.</text>
</comment>
<comment type="PTM">
    <text evidence="1">Phosphorylation at Thr-170 by PKC/PKCD increases its phospholipid scramblase activity during both cell stimulation and apoptosis (By similarity). Phosphorylated by OXSR1 in the presence of RELT (By similarity).</text>
</comment>
<comment type="PTM">
    <text evidence="1">Palmitoylation is required for its phospholipid scramblase activity (By similarity). Palmitoylation regulates its localization to the cell membrane or the nucleus; trafficking to the cell membrane is dependent upon palmitoylation whereas in the absence of palmitoylation, localizes to the nucleus (By similarity).</text>
</comment>
<comment type="disease">
    <text>Participates in a chromosomal translocation that produces MMTRA1A which is leukemogenic to syngenic SL mice and athymic nude mice.</text>
</comment>
<comment type="disruption phenotype">
    <text evidence="4 7">Knockout newborn mice display a reduced granulocyte production (PubMed:12010804). Hematopoietic precursor cell from knockout mice display defective colony formation and impaired differentiation to mature granulocytes as stimulated by SCF/KITL and GCSF/CSF3 (PubMed:12010804). Deletion mutant mice start to die at 3 days post-infection after influenza H1N1 challenge, and the survival rate drops to 50% at 28 days post-infection showing lower survival rate than WT mice.</text>
</comment>
<comment type="similarity">
    <text evidence="8">Belongs to the phospholipid scramblase family.</text>
</comment>
<comment type="sequence caution" evidence="8">
    <conflict type="erroneous initiation">
        <sequence resource="EMBL-CDS" id="BAA23663"/>
    </conflict>
</comment>
<comment type="sequence caution" evidence="8">
    <conflict type="frameshift">
        <sequence resource="EMBL-CDS" id="BAA23664"/>
    </conflict>
</comment>
<accession>Q9JJ00</accession>
<accession>O54730</accession>
<accession>O54731</accession>
<accession>Q9D1F8</accession>
<organism>
    <name type="scientific">Mus musculus</name>
    <name type="common">Mouse</name>
    <dbReference type="NCBI Taxonomy" id="10090"/>
    <lineage>
        <taxon>Eukaryota</taxon>
        <taxon>Metazoa</taxon>
        <taxon>Chordata</taxon>
        <taxon>Craniata</taxon>
        <taxon>Vertebrata</taxon>
        <taxon>Euteleostomi</taxon>
        <taxon>Mammalia</taxon>
        <taxon>Eutheria</taxon>
        <taxon>Euarchontoglires</taxon>
        <taxon>Glires</taxon>
        <taxon>Rodentia</taxon>
        <taxon>Myomorpha</taxon>
        <taxon>Muroidea</taxon>
        <taxon>Muridae</taxon>
        <taxon>Murinae</taxon>
        <taxon>Mus</taxon>
        <taxon>Mus</taxon>
    </lineage>
</organism>
<proteinExistence type="evidence at protein level"/>
<name>PLS1_MOUSE</name>